<keyword id="KW-0997">Cell inner membrane</keyword>
<keyword id="KW-1003">Cell membrane</keyword>
<keyword id="KW-0472">Membrane</keyword>
<keyword id="KW-1185">Reference proteome</keyword>
<evidence type="ECO:0000255" key="1">
    <source>
        <dbReference type="HAMAP-Rule" id="MF_01104"/>
    </source>
</evidence>
<reference key="1">
    <citation type="submission" date="2007-02" db="EMBL/GenBank/DDBJ databases">
        <title>Complete sequence of chromosome of Shewanella baltica OS155.</title>
        <authorList>
            <consortium name="US DOE Joint Genome Institute"/>
            <person name="Copeland A."/>
            <person name="Lucas S."/>
            <person name="Lapidus A."/>
            <person name="Barry K."/>
            <person name="Detter J.C."/>
            <person name="Glavina del Rio T."/>
            <person name="Hammon N."/>
            <person name="Israni S."/>
            <person name="Dalin E."/>
            <person name="Tice H."/>
            <person name="Pitluck S."/>
            <person name="Sims D.R."/>
            <person name="Brettin T."/>
            <person name="Bruce D."/>
            <person name="Han C."/>
            <person name="Tapia R."/>
            <person name="Brainard J."/>
            <person name="Schmutz J."/>
            <person name="Larimer F."/>
            <person name="Land M."/>
            <person name="Hauser L."/>
            <person name="Kyrpides N."/>
            <person name="Mikhailova N."/>
            <person name="Brettar I."/>
            <person name="Klappenbach J."/>
            <person name="Konstantinidis K."/>
            <person name="Rodrigues J."/>
            <person name="Tiedje J."/>
            <person name="Richardson P."/>
        </authorList>
    </citation>
    <scope>NUCLEOTIDE SEQUENCE [LARGE SCALE GENOMIC DNA]</scope>
    <source>
        <strain>OS155 / ATCC BAA-1091</strain>
    </source>
</reference>
<comment type="function">
    <text evidence="1">Interacts with the SecY protein in vivo. May bind preferentially to an uncomplexed state of SecY, thus functioning either as a chelating agent for excess SecY in the cell or as a regulatory factor that negatively controls the translocase function.</text>
</comment>
<comment type="subcellular location">
    <subcellularLocation>
        <location evidence="1">Cell inner membrane</location>
        <topology evidence="1">Peripheral membrane protein</topology>
        <orientation evidence="1">Cytoplasmic side</orientation>
    </subcellularLocation>
    <text evidence="1">Loosely associated with the cytoplasmic side of the inner membrane, probably via SecY.</text>
</comment>
<comment type="similarity">
    <text evidence="1">Belongs to the Syd family.</text>
</comment>
<gene>
    <name evidence="1" type="primary">syd</name>
    <name type="ordered locus">Sbal_1432</name>
</gene>
<protein>
    <recommendedName>
        <fullName evidence="1">Protein Syd</fullName>
    </recommendedName>
</protein>
<organism>
    <name type="scientific">Shewanella baltica (strain OS155 / ATCC BAA-1091)</name>
    <dbReference type="NCBI Taxonomy" id="325240"/>
    <lineage>
        <taxon>Bacteria</taxon>
        <taxon>Pseudomonadati</taxon>
        <taxon>Pseudomonadota</taxon>
        <taxon>Gammaproteobacteria</taxon>
        <taxon>Alteromonadales</taxon>
        <taxon>Shewanellaceae</taxon>
        <taxon>Shewanella</taxon>
    </lineage>
</organism>
<accession>A3D2I7</accession>
<feature type="chain" id="PRO_1000065043" description="Protein Syd">
    <location>
        <begin position="1"/>
        <end position="216"/>
    </location>
</feature>
<name>SYDP_SHEB5</name>
<sequence>MSCLPALDKFLQNYHQAYLTSLGELPRYYPQGEPSVCIQGEFHADLDQAVSWQPVKREVEGSFANVEHALELTLWPEINHFYGQYFSAPLLFDSEWGTGELLQVWNEDDFTCLQQNLIGHLMMKKKLKQPPTWFIGLLDEGDKMLTINNSDGSVWIELPGEIPTQQLSPSLAEFIGALSPRIAPPVKHEELPMPALEHPGIFASFKRMWQNLFGKR</sequence>
<dbReference type="EMBL" id="CP000563">
    <property type="protein sequence ID" value="ABN60950.1"/>
    <property type="molecule type" value="Genomic_DNA"/>
</dbReference>
<dbReference type="RefSeq" id="WP_006080958.1">
    <property type="nucleotide sequence ID" value="NC_009052.1"/>
</dbReference>
<dbReference type="SMR" id="A3D2I7"/>
<dbReference type="STRING" id="325240.Sbal_1432"/>
<dbReference type="KEGG" id="sbl:Sbal_1432"/>
<dbReference type="HOGENOM" id="CLU_121866_0_0_6"/>
<dbReference type="OrthoDB" id="5599437at2"/>
<dbReference type="Proteomes" id="UP000001557">
    <property type="component" value="Chromosome"/>
</dbReference>
<dbReference type="GO" id="GO:0009898">
    <property type="term" value="C:cytoplasmic side of plasma membrane"/>
    <property type="evidence" value="ECO:0007669"/>
    <property type="project" value="InterPro"/>
</dbReference>
<dbReference type="CDD" id="cd16323">
    <property type="entry name" value="Syd"/>
    <property type="match status" value="1"/>
</dbReference>
<dbReference type="Gene3D" id="3.40.1580.20">
    <property type="entry name" value="Syd protein"/>
    <property type="match status" value="1"/>
</dbReference>
<dbReference type="HAMAP" id="MF_01104">
    <property type="entry name" value="Syd"/>
    <property type="match status" value="1"/>
</dbReference>
<dbReference type="InterPro" id="IPR009948">
    <property type="entry name" value="Syd"/>
</dbReference>
<dbReference type="InterPro" id="IPR038228">
    <property type="entry name" value="Syd_sf"/>
</dbReference>
<dbReference type="NCBIfam" id="NF003439">
    <property type="entry name" value="PRK04968.1"/>
    <property type="match status" value="1"/>
</dbReference>
<dbReference type="Pfam" id="PF07348">
    <property type="entry name" value="Syd"/>
    <property type="match status" value="1"/>
</dbReference>
<proteinExistence type="inferred from homology"/>